<accession>P56099</accession>
<name>HIS8_CANMA</name>
<keyword id="KW-0028">Amino-acid biosynthesis</keyword>
<keyword id="KW-0032">Aminotransferase</keyword>
<keyword id="KW-0368">Histidine biosynthesis</keyword>
<keyword id="KW-0663">Pyridoxal phosphate</keyword>
<keyword id="KW-0808">Transferase</keyword>
<comment type="catalytic activity">
    <reaction>
        <text>L-histidinol phosphate + 2-oxoglutarate = 3-(imidazol-4-yl)-2-oxopropyl phosphate + L-glutamate</text>
        <dbReference type="Rhea" id="RHEA:23744"/>
        <dbReference type="ChEBI" id="CHEBI:16810"/>
        <dbReference type="ChEBI" id="CHEBI:29985"/>
        <dbReference type="ChEBI" id="CHEBI:57766"/>
        <dbReference type="ChEBI" id="CHEBI:57980"/>
        <dbReference type="EC" id="2.6.1.9"/>
    </reaction>
</comment>
<comment type="cofactor">
    <cofactor>
        <name>pyridoxal 5'-phosphate</name>
        <dbReference type="ChEBI" id="CHEBI:597326"/>
    </cofactor>
</comment>
<comment type="pathway">
    <text>Amino-acid biosynthesis; L-histidine biosynthesis; L-histidine from 5-phospho-alpha-D-ribose 1-diphosphate: step 7/9.</text>
</comment>
<comment type="similarity">
    <text evidence="1">Belongs to the class-II pyridoxal-phosphate-dependent aminotransferase family.</text>
</comment>
<organism>
    <name type="scientific">Candida maltosa</name>
    <name type="common">Yeast</name>
    <dbReference type="NCBI Taxonomy" id="5479"/>
    <lineage>
        <taxon>Eukaryota</taxon>
        <taxon>Fungi</taxon>
        <taxon>Dikarya</taxon>
        <taxon>Ascomycota</taxon>
        <taxon>Saccharomycotina</taxon>
        <taxon>Pichiomycetes</taxon>
        <taxon>Debaryomycetaceae</taxon>
        <taxon>Candida/Lodderomyces clade</taxon>
        <taxon>Candida</taxon>
    </lineage>
</organism>
<feature type="chain" id="PRO_0000153507" description="Histidinol-phosphate aminotransferase">
    <location>
        <begin position="1"/>
        <end position="389"/>
    </location>
</feature>
<feature type="modified residue" description="N6-(pyridoxal phosphate)lysine" evidence="1">
    <location>
        <position position="233"/>
    </location>
</feature>
<gene>
    <name type="primary">HIS5</name>
</gene>
<proteinExistence type="inferred from homology"/>
<sequence>MFDIKSIIRPNILTLEPYRCARDDFKTGILLDANENTHGPAIPTPDETELALELNRYPDPHQLELKQQVIDFREKHPNKYTKEKLSVENLCLGVGSDESIDMLLRCVCVPGKDKMLICPPTYGMYSICATVNDVVIEKVPLTVPDFQIDIPAILSKVKSDPNIKLLYLTSPGNPTGKLINVDSIITLLEELLNCWQGLIVVDEAYIDFTEPGSSMSTLVNQYPNLVVLQTLSKSFGLAGIRLGITFCSKELSWYLNAMKYPYNISSLTSNVALKATKQGLEIMENYVSKITEQRDIVLQKLLSLKYVGRNIGGLDSNFVLVEVLDKQGNPSNEVAKQLYNTLATGKSIVVRFRGSELNCVGGLRISIGTEEENKQLLEQFEAVLNDINQ</sequence>
<protein>
    <recommendedName>
        <fullName>Histidinol-phosphate aminotransferase</fullName>
        <ecNumber>2.6.1.9</ecNumber>
    </recommendedName>
    <alternativeName>
        <fullName>Imidazole acetol-phosphate transaminase</fullName>
    </alternativeName>
</protein>
<evidence type="ECO:0000305" key="1"/>
<reference key="1">
    <citation type="journal article" date="1989" name="Curr. Genet.">
        <title>An improved host-vector system for Candida maltosa using a gene isolated from its genome that complements the his5 mutation of Saccharomyces cerevisiae.</title>
        <authorList>
            <person name="Hikijii T."/>
            <person name="Ohkuma M."/>
            <person name="Takagi M."/>
            <person name="Yano K."/>
        </authorList>
    </citation>
    <scope>NUCLEOTIDE SEQUENCE [GENOMIC DNA]</scope>
</reference>
<dbReference type="EC" id="2.6.1.9"/>
<dbReference type="EMBL" id="X17310">
    <property type="protein sequence ID" value="CAA35189.1"/>
    <property type="molecule type" value="Genomic_DNA"/>
</dbReference>
<dbReference type="PIR" id="A48329">
    <property type="entry name" value="A48329"/>
</dbReference>
<dbReference type="SMR" id="P56099"/>
<dbReference type="UniPathway" id="UPA00031">
    <property type="reaction ID" value="UER00012"/>
</dbReference>
<dbReference type="GO" id="GO:0004400">
    <property type="term" value="F:histidinol-phosphate transaminase activity"/>
    <property type="evidence" value="ECO:0007669"/>
    <property type="project" value="UniProtKB-EC"/>
</dbReference>
<dbReference type="GO" id="GO:0030170">
    <property type="term" value="F:pyridoxal phosphate binding"/>
    <property type="evidence" value="ECO:0007669"/>
    <property type="project" value="InterPro"/>
</dbReference>
<dbReference type="GO" id="GO:0000105">
    <property type="term" value="P:L-histidine biosynthetic process"/>
    <property type="evidence" value="ECO:0007669"/>
    <property type="project" value="UniProtKB-UniPathway"/>
</dbReference>
<dbReference type="CDD" id="cd00609">
    <property type="entry name" value="AAT_like"/>
    <property type="match status" value="1"/>
</dbReference>
<dbReference type="Gene3D" id="3.90.1150.10">
    <property type="entry name" value="Aspartate Aminotransferase, domain 1"/>
    <property type="match status" value="1"/>
</dbReference>
<dbReference type="Gene3D" id="3.40.640.10">
    <property type="entry name" value="Type I PLP-dependent aspartate aminotransferase-like (Major domain)"/>
    <property type="match status" value="1"/>
</dbReference>
<dbReference type="HAMAP" id="MF_01023">
    <property type="entry name" value="HisC_aminotrans_2"/>
    <property type="match status" value="1"/>
</dbReference>
<dbReference type="InterPro" id="IPR001917">
    <property type="entry name" value="Aminotrans_II_pyridoxalP_BS"/>
</dbReference>
<dbReference type="InterPro" id="IPR004839">
    <property type="entry name" value="Aminotransferase_I/II_large"/>
</dbReference>
<dbReference type="InterPro" id="IPR005861">
    <property type="entry name" value="HisP_aminotrans"/>
</dbReference>
<dbReference type="InterPro" id="IPR015424">
    <property type="entry name" value="PyrdxlP-dep_Trfase"/>
</dbReference>
<dbReference type="InterPro" id="IPR015421">
    <property type="entry name" value="PyrdxlP-dep_Trfase_major"/>
</dbReference>
<dbReference type="InterPro" id="IPR015422">
    <property type="entry name" value="PyrdxlP-dep_Trfase_small"/>
</dbReference>
<dbReference type="NCBIfam" id="TIGR01141">
    <property type="entry name" value="hisC"/>
    <property type="match status" value="1"/>
</dbReference>
<dbReference type="PANTHER" id="PTHR42885:SF2">
    <property type="entry name" value="HISTIDINOL-PHOSPHATE AMINOTRANSFERASE"/>
    <property type="match status" value="1"/>
</dbReference>
<dbReference type="PANTHER" id="PTHR42885">
    <property type="entry name" value="HISTIDINOL-PHOSPHATE AMINOTRANSFERASE-RELATED"/>
    <property type="match status" value="1"/>
</dbReference>
<dbReference type="Pfam" id="PF00155">
    <property type="entry name" value="Aminotran_1_2"/>
    <property type="match status" value="1"/>
</dbReference>
<dbReference type="SUPFAM" id="SSF53383">
    <property type="entry name" value="PLP-dependent transferases"/>
    <property type="match status" value="1"/>
</dbReference>
<dbReference type="PROSITE" id="PS00599">
    <property type="entry name" value="AA_TRANSFER_CLASS_2"/>
    <property type="match status" value="1"/>
</dbReference>